<organism>
    <name type="scientific">Salmonella paratyphi B (strain ATCC BAA-1250 / SPB7)</name>
    <dbReference type="NCBI Taxonomy" id="1016998"/>
    <lineage>
        <taxon>Bacteria</taxon>
        <taxon>Pseudomonadati</taxon>
        <taxon>Pseudomonadota</taxon>
        <taxon>Gammaproteobacteria</taxon>
        <taxon>Enterobacterales</taxon>
        <taxon>Enterobacteriaceae</taxon>
        <taxon>Salmonella</taxon>
    </lineage>
</organism>
<dbReference type="EMBL" id="CP000886">
    <property type="protein sequence ID" value="ABX70256.1"/>
    <property type="molecule type" value="Genomic_DNA"/>
</dbReference>
<dbReference type="RefSeq" id="WP_000743292.1">
    <property type="nucleotide sequence ID" value="NC_010102.1"/>
</dbReference>
<dbReference type="SMR" id="A9MYC8"/>
<dbReference type="KEGG" id="spq:SPAB_04964"/>
<dbReference type="PATRIC" id="fig|1016998.12.peg.4656"/>
<dbReference type="HOGENOM" id="CLU_094104_2_0_6"/>
<dbReference type="BioCyc" id="SENT1016998:SPAB_RS20190-MONOMER"/>
<dbReference type="Proteomes" id="UP000008556">
    <property type="component" value="Chromosome"/>
</dbReference>
<dbReference type="GO" id="GO:0005096">
    <property type="term" value="F:GTPase activator activity"/>
    <property type="evidence" value="ECO:0007669"/>
    <property type="project" value="UniProtKB-KW"/>
</dbReference>
<dbReference type="GO" id="GO:0042254">
    <property type="term" value="P:ribosome biogenesis"/>
    <property type="evidence" value="ECO:0007669"/>
    <property type="project" value="UniProtKB-KW"/>
</dbReference>
<dbReference type="HAMAP" id="MF_01058">
    <property type="entry name" value="GAP_YihI"/>
    <property type="match status" value="1"/>
</dbReference>
<dbReference type="InterPro" id="IPR007336">
    <property type="entry name" value="YihI"/>
</dbReference>
<dbReference type="NCBIfam" id="NF003560">
    <property type="entry name" value="PRK05244.1-1"/>
    <property type="match status" value="1"/>
</dbReference>
<dbReference type="Pfam" id="PF04220">
    <property type="entry name" value="YihI"/>
    <property type="match status" value="1"/>
</dbReference>
<gene>
    <name evidence="1" type="primary">yihI</name>
    <name type="ordered locus">SPAB_04964</name>
</gene>
<protein>
    <recommendedName>
        <fullName evidence="1">Der GTPase-activating protein YihI</fullName>
    </recommendedName>
</protein>
<comment type="function">
    <text evidence="1">A GTPase-activating protein (GAP) that modifies Der/EngA GTPase function. May play a role in ribosome biogenesis.</text>
</comment>
<comment type="subunit">
    <text evidence="1">Interacts with Der.</text>
</comment>
<comment type="similarity">
    <text evidence="1">Belongs to the YihI family.</text>
</comment>
<name>YIHI_SALPB</name>
<keyword id="KW-0343">GTPase activation</keyword>
<keyword id="KW-0690">Ribosome biogenesis</keyword>
<proteinExistence type="inferred from homology"/>
<evidence type="ECO:0000255" key="1">
    <source>
        <dbReference type="HAMAP-Rule" id="MF_01058"/>
    </source>
</evidence>
<evidence type="ECO:0000256" key="2">
    <source>
        <dbReference type="SAM" id="MobiDB-lite"/>
    </source>
</evidence>
<sequence length="171" mass="19213">MKKPTSAPRSKAFGKQRRKTREELNQEARDRKRLKKHRGHAPGSRAAGGNSASGGGNQNQQKDPRIGSKTPVPLGVTEKVTQQHKPKSEKPMLSPQAELDLLETDERLDALLERLEAGETLSAEDQAWVDAKLDRIDELMQKLGLSYDDDEEDDEEDEKQEDMMRLLRGGN</sequence>
<feature type="chain" id="PRO_1000084456" description="Der GTPase-activating protein YihI">
    <location>
        <begin position="1"/>
        <end position="171"/>
    </location>
</feature>
<feature type="region of interest" description="Disordered" evidence="2">
    <location>
        <begin position="1"/>
        <end position="99"/>
    </location>
</feature>
<feature type="region of interest" description="Disordered" evidence="2">
    <location>
        <begin position="145"/>
        <end position="171"/>
    </location>
</feature>
<feature type="compositionally biased region" description="Basic and acidic residues" evidence="2">
    <location>
        <begin position="20"/>
        <end position="30"/>
    </location>
</feature>
<feature type="compositionally biased region" description="Basic residues" evidence="2">
    <location>
        <begin position="31"/>
        <end position="40"/>
    </location>
</feature>
<feature type="compositionally biased region" description="Acidic residues" evidence="2">
    <location>
        <begin position="147"/>
        <end position="160"/>
    </location>
</feature>
<accession>A9MYC8</accession>
<reference key="1">
    <citation type="submission" date="2007-11" db="EMBL/GenBank/DDBJ databases">
        <authorList>
            <consortium name="The Salmonella enterica serovar Paratyphi B Genome Sequencing Project"/>
            <person name="McClelland M."/>
            <person name="Sanderson E.K."/>
            <person name="Porwollik S."/>
            <person name="Spieth J."/>
            <person name="Clifton W.S."/>
            <person name="Fulton R."/>
            <person name="Cordes M."/>
            <person name="Wollam A."/>
            <person name="Shah N."/>
            <person name="Pepin K."/>
            <person name="Bhonagiri V."/>
            <person name="Nash W."/>
            <person name="Johnson M."/>
            <person name="Thiruvilangam P."/>
            <person name="Wilson R."/>
        </authorList>
    </citation>
    <scope>NUCLEOTIDE SEQUENCE [LARGE SCALE GENOMIC DNA]</scope>
    <source>
        <strain>ATCC BAA-1250 / SPB7</strain>
    </source>
</reference>